<accession>Q5H3I5</accession>
<reference key="1">
    <citation type="journal article" date="2005" name="Nucleic Acids Res.">
        <title>The genome sequence of Xanthomonas oryzae pathovar oryzae KACC10331, the bacterial blight pathogen of rice.</title>
        <authorList>
            <person name="Lee B.-M."/>
            <person name="Park Y.-J."/>
            <person name="Park D.-S."/>
            <person name="Kang H.-W."/>
            <person name="Kim J.-G."/>
            <person name="Song E.-S."/>
            <person name="Park I.-C."/>
            <person name="Yoon U.-H."/>
            <person name="Hahn J.-H."/>
            <person name="Koo B.-S."/>
            <person name="Lee G.-B."/>
            <person name="Kim H."/>
            <person name="Park H.-S."/>
            <person name="Yoon K.-O."/>
            <person name="Kim J.-H."/>
            <person name="Jung C.-H."/>
            <person name="Koh N.-H."/>
            <person name="Seo J.-S."/>
            <person name="Go S.-J."/>
        </authorList>
    </citation>
    <scope>NUCLEOTIDE SEQUENCE [LARGE SCALE GENOMIC DNA]</scope>
    <source>
        <strain>KACC10331 / KXO85</strain>
    </source>
</reference>
<dbReference type="EC" id="5.4.3.8" evidence="1"/>
<dbReference type="EMBL" id="AE013598">
    <property type="protein sequence ID" value="AAW74486.1"/>
    <property type="status" value="ALT_INIT"/>
    <property type="molecule type" value="Genomic_DNA"/>
</dbReference>
<dbReference type="SMR" id="Q5H3I5"/>
<dbReference type="STRING" id="291331.XOO1232"/>
<dbReference type="KEGG" id="xoo:XOO1232"/>
<dbReference type="PATRIC" id="fig|291331.8.peg.1367"/>
<dbReference type="HOGENOM" id="CLU_016922_1_5_6"/>
<dbReference type="UniPathway" id="UPA00251">
    <property type="reaction ID" value="UER00317"/>
</dbReference>
<dbReference type="Proteomes" id="UP000006735">
    <property type="component" value="Chromosome"/>
</dbReference>
<dbReference type="GO" id="GO:0005737">
    <property type="term" value="C:cytoplasm"/>
    <property type="evidence" value="ECO:0007669"/>
    <property type="project" value="UniProtKB-SubCell"/>
</dbReference>
<dbReference type="GO" id="GO:0042286">
    <property type="term" value="F:glutamate-1-semialdehyde 2,1-aminomutase activity"/>
    <property type="evidence" value="ECO:0007669"/>
    <property type="project" value="UniProtKB-UniRule"/>
</dbReference>
<dbReference type="GO" id="GO:0030170">
    <property type="term" value="F:pyridoxal phosphate binding"/>
    <property type="evidence" value="ECO:0007669"/>
    <property type="project" value="InterPro"/>
</dbReference>
<dbReference type="GO" id="GO:0008483">
    <property type="term" value="F:transaminase activity"/>
    <property type="evidence" value="ECO:0007669"/>
    <property type="project" value="InterPro"/>
</dbReference>
<dbReference type="GO" id="GO:0006782">
    <property type="term" value="P:protoporphyrinogen IX biosynthetic process"/>
    <property type="evidence" value="ECO:0007669"/>
    <property type="project" value="UniProtKB-UniRule"/>
</dbReference>
<dbReference type="CDD" id="cd00610">
    <property type="entry name" value="OAT_like"/>
    <property type="match status" value="1"/>
</dbReference>
<dbReference type="FunFam" id="3.40.640.10:FF:000021">
    <property type="entry name" value="Glutamate-1-semialdehyde 2,1-aminomutase"/>
    <property type="match status" value="1"/>
</dbReference>
<dbReference type="Gene3D" id="3.90.1150.10">
    <property type="entry name" value="Aspartate Aminotransferase, domain 1"/>
    <property type="match status" value="1"/>
</dbReference>
<dbReference type="Gene3D" id="3.40.640.10">
    <property type="entry name" value="Type I PLP-dependent aspartate aminotransferase-like (Major domain)"/>
    <property type="match status" value="1"/>
</dbReference>
<dbReference type="HAMAP" id="MF_00375">
    <property type="entry name" value="HemL_aminotrans_3"/>
    <property type="match status" value="1"/>
</dbReference>
<dbReference type="InterPro" id="IPR004639">
    <property type="entry name" value="4pyrrol_synth_GluAld_NH2Trfase"/>
</dbReference>
<dbReference type="InterPro" id="IPR005814">
    <property type="entry name" value="Aminotrans_3"/>
</dbReference>
<dbReference type="InterPro" id="IPR049704">
    <property type="entry name" value="Aminotrans_3_PPA_site"/>
</dbReference>
<dbReference type="InterPro" id="IPR015424">
    <property type="entry name" value="PyrdxlP-dep_Trfase"/>
</dbReference>
<dbReference type="InterPro" id="IPR015421">
    <property type="entry name" value="PyrdxlP-dep_Trfase_major"/>
</dbReference>
<dbReference type="InterPro" id="IPR015422">
    <property type="entry name" value="PyrdxlP-dep_Trfase_small"/>
</dbReference>
<dbReference type="NCBIfam" id="TIGR00713">
    <property type="entry name" value="hemL"/>
    <property type="match status" value="1"/>
</dbReference>
<dbReference type="NCBIfam" id="NF000818">
    <property type="entry name" value="PRK00062.1"/>
    <property type="match status" value="1"/>
</dbReference>
<dbReference type="PANTHER" id="PTHR43713">
    <property type="entry name" value="GLUTAMATE-1-SEMIALDEHYDE 2,1-AMINOMUTASE"/>
    <property type="match status" value="1"/>
</dbReference>
<dbReference type="PANTHER" id="PTHR43713:SF3">
    <property type="entry name" value="GLUTAMATE-1-SEMIALDEHYDE 2,1-AMINOMUTASE 1, CHLOROPLASTIC-RELATED"/>
    <property type="match status" value="1"/>
</dbReference>
<dbReference type="Pfam" id="PF00202">
    <property type="entry name" value="Aminotran_3"/>
    <property type="match status" value="1"/>
</dbReference>
<dbReference type="SUPFAM" id="SSF53383">
    <property type="entry name" value="PLP-dependent transferases"/>
    <property type="match status" value="1"/>
</dbReference>
<dbReference type="PROSITE" id="PS00600">
    <property type="entry name" value="AA_TRANSFER_CLASS_3"/>
    <property type="match status" value="1"/>
</dbReference>
<proteinExistence type="inferred from homology"/>
<keyword id="KW-0963">Cytoplasm</keyword>
<keyword id="KW-0413">Isomerase</keyword>
<keyword id="KW-0627">Porphyrin biosynthesis</keyword>
<keyword id="KW-0663">Pyridoxal phosphate</keyword>
<keyword id="KW-1185">Reference proteome</keyword>
<comment type="catalytic activity">
    <reaction evidence="1">
        <text>(S)-4-amino-5-oxopentanoate = 5-aminolevulinate</text>
        <dbReference type="Rhea" id="RHEA:14265"/>
        <dbReference type="ChEBI" id="CHEBI:57501"/>
        <dbReference type="ChEBI" id="CHEBI:356416"/>
        <dbReference type="EC" id="5.4.3.8"/>
    </reaction>
</comment>
<comment type="cofactor">
    <cofactor evidence="1">
        <name>pyridoxal 5'-phosphate</name>
        <dbReference type="ChEBI" id="CHEBI:597326"/>
    </cofactor>
</comment>
<comment type="pathway">
    <text evidence="1">Porphyrin-containing compound metabolism; protoporphyrin-IX biosynthesis; 5-aminolevulinate from L-glutamyl-tRNA(Glu): step 2/2.</text>
</comment>
<comment type="subunit">
    <text evidence="1">Homodimer.</text>
</comment>
<comment type="subcellular location">
    <subcellularLocation>
        <location evidence="1">Cytoplasm</location>
    </subcellularLocation>
</comment>
<comment type="similarity">
    <text evidence="1">Belongs to the class-III pyridoxal-phosphate-dependent aminotransferase family. HemL subfamily.</text>
</comment>
<comment type="sequence caution" evidence="2">
    <conflict type="erroneous initiation">
        <sequence resource="EMBL-CDS" id="AAW74486"/>
    </conflict>
</comment>
<organism>
    <name type="scientific">Xanthomonas oryzae pv. oryzae (strain KACC10331 / KXO85)</name>
    <dbReference type="NCBI Taxonomy" id="291331"/>
    <lineage>
        <taxon>Bacteria</taxon>
        <taxon>Pseudomonadati</taxon>
        <taxon>Pseudomonadota</taxon>
        <taxon>Gammaproteobacteria</taxon>
        <taxon>Lysobacterales</taxon>
        <taxon>Lysobacteraceae</taxon>
        <taxon>Xanthomonas</taxon>
    </lineage>
</organism>
<gene>
    <name evidence="1" type="primary">hemL</name>
    <name type="ordered locus">XOO1232</name>
</gene>
<name>GSA_XANOR</name>
<feature type="chain" id="PRO_0000243645" description="Glutamate-1-semialdehyde 2,1-aminomutase">
    <location>
        <begin position="1"/>
        <end position="429"/>
    </location>
</feature>
<feature type="modified residue" description="N6-(pyridoxal phosphate)lysine" evidence="1">
    <location>
        <position position="267"/>
    </location>
</feature>
<protein>
    <recommendedName>
        <fullName evidence="1">Glutamate-1-semialdehyde 2,1-aminomutase</fullName>
        <shortName evidence="1">GSA</shortName>
        <ecNumber evidence="1">5.4.3.8</ecNumber>
    </recommendedName>
    <alternativeName>
        <fullName evidence="1">Glutamate-1-semialdehyde aminotransferase</fullName>
        <shortName evidence="1">GSA-AT</shortName>
    </alternativeName>
</protein>
<evidence type="ECO:0000255" key="1">
    <source>
        <dbReference type="HAMAP-Rule" id="MF_00375"/>
    </source>
</evidence>
<evidence type="ECO:0000305" key="2"/>
<sequence length="429" mass="44904">MNHSRSHALFAQAQTVLPGGVNSPVRAFKSVGGEPFFVARADGSYLFDVDGNRYIDYVGSWGPMIAGHNHPAVREAVERAIRDGLSFGAPCAAEVTMAETITGLVPSCEMVRMVNSGTEATLSAVRLARGATGRNRIIKFEGCYHGHGDSFLVKAGSGMLTLGVPTSPGVPAGLSELTATLSFNDFEGATALFDEIGPEVAAVIIEPVVGNANCIPPQAGYLQHLRTLCTRHGALLIFDEVMTGFRVALGGAQAHYGVTPDLSTFGKIIGGGMPVGAYGGRRDLMEQIAPAGPIYQAGTLSGNPVAMAAGLAMLELVQEPGFHMRLSEATSALCEGLKDAARTAGIAVTTNQVGGMFGLFFTDDIVESYAQATACDITSFNRFFHAMLQRGVYLAPSAYEAGFMSSAHDATVIEATLAAARDAFADVAR</sequence>